<dbReference type="EMBL" id="CP000560">
    <property type="protein sequence ID" value="ABS75319.1"/>
    <property type="molecule type" value="Genomic_DNA"/>
</dbReference>
<dbReference type="RefSeq" id="WP_003151844.1">
    <property type="nucleotide sequence ID" value="NC_009725.2"/>
</dbReference>
<dbReference type="SMR" id="A7Z8J3"/>
<dbReference type="GeneID" id="93082130"/>
<dbReference type="KEGG" id="bay:RBAM_029880"/>
<dbReference type="HOGENOM" id="CLU_097408_2_2_9"/>
<dbReference type="Proteomes" id="UP000001120">
    <property type="component" value="Chromosome"/>
</dbReference>
<dbReference type="GO" id="GO:0005829">
    <property type="term" value="C:cytosol"/>
    <property type="evidence" value="ECO:0007669"/>
    <property type="project" value="TreeGrafter"/>
</dbReference>
<dbReference type="GO" id="GO:0005960">
    <property type="term" value="C:glycine cleavage complex"/>
    <property type="evidence" value="ECO:0007669"/>
    <property type="project" value="InterPro"/>
</dbReference>
<dbReference type="GO" id="GO:0019464">
    <property type="term" value="P:glycine decarboxylation via glycine cleavage system"/>
    <property type="evidence" value="ECO:0007669"/>
    <property type="project" value="UniProtKB-UniRule"/>
</dbReference>
<dbReference type="CDD" id="cd06848">
    <property type="entry name" value="GCS_H"/>
    <property type="match status" value="1"/>
</dbReference>
<dbReference type="Gene3D" id="2.40.50.100">
    <property type="match status" value="1"/>
</dbReference>
<dbReference type="HAMAP" id="MF_00272">
    <property type="entry name" value="GcvH"/>
    <property type="match status" value="1"/>
</dbReference>
<dbReference type="InterPro" id="IPR003016">
    <property type="entry name" value="2-oxoA_DH_lipoyl-BS"/>
</dbReference>
<dbReference type="InterPro" id="IPR000089">
    <property type="entry name" value="Biotin_lipoyl"/>
</dbReference>
<dbReference type="InterPro" id="IPR002930">
    <property type="entry name" value="GCV_H"/>
</dbReference>
<dbReference type="InterPro" id="IPR033753">
    <property type="entry name" value="GCV_H/Fam206"/>
</dbReference>
<dbReference type="InterPro" id="IPR017453">
    <property type="entry name" value="GCV_H_sub"/>
</dbReference>
<dbReference type="InterPro" id="IPR011053">
    <property type="entry name" value="Single_hybrid_motif"/>
</dbReference>
<dbReference type="NCBIfam" id="TIGR00527">
    <property type="entry name" value="gcvH"/>
    <property type="match status" value="1"/>
</dbReference>
<dbReference type="NCBIfam" id="NF002270">
    <property type="entry name" value="PRK01202.1"/>
    <property type="match status" value="1"/>
</dbReference>
<dbReference type="PANTHER" id="PTHR11715">
    <property type="entry name" value="GLYCINE CLEAVAGE SYSTEM H PROTEIN"/>
    <property type="match status" value="1"/>
</dbReference>
<dbReference type="PANTHER" id="PTHR11715:SF3">
    <property type="entry name" value="GLYCINE CLEAVAGE SYSTEM H PROTEIN-RELATED"/>
    <property type="match status" value="1"/>
</dbReference>
<dbReference type="Pfam" id="PF01597">
    <property type="entry name" value="GCV_H"/>
    <property type="match status" value="1"/>
</dbReference>
<dbReference type="SUPFAM" id="SSF51230">
    <property type="entry name" value="Single hybrid motif"/>
    <property type="match status" value="1"/>
</dbReference>
<dbReference type="PROSITE" id="PS50968">
    <property type="entry name" value="BIOTINYL_LIPOYL"/>
    <property type="match status" value="1"/>
</dbReference>
<dbReference type="PROSITE" id="PS00189">
    <property type="entry name" value="LIPOYL"/>
    <property type="match status" value="1"/>
</dbReference>
<feature type="chain" id="PRO_1000022188" description="Glycine cleavage system H protein">
    <location>
        <begin position="1"/>
        <end position="127"/>
    </location>
</feature>
<feature type="domain" description="Lipoyl-binding" evidence="2">
    <location>
        <begin position="22"/>
        <end position="104"/>
    </location>
</feature>
<feature type="modified residue" description="N6-lipoyllysine" evidence="1">
    <location>
        <position position="63"/>
    </location>
</feature>
<name>GCSH_BACVZ</name>
<evidence type="ECO:0000255" key="1">
    <source>
        <dbReference type="HAMAP-Rule" id="MF_00272"/>
    </source>
</evidence>
<evidence type="ECO:0000255" key="2">
    <source>
        <dbReference type="PROSITE-ProRule" id="PRU01066"/>
    </source>
</evidence>
<keyword id="KW-0450">Lipoyl</keyword>
<organism>
    <name type="scientific">Bacillus velezensis (strain DSM 23117 / BGSC 10A6 / LMG 26770 / FZB42)</name>
    <name type="common">Bacillus amyloliquefaciens subsp. plantarum</name>
    <dbReference type="NCBI Taxonomy" id="326423"/>
    <lineage>
        <taxon>Bacteria</taxon>
        <taxon>Bacillati</taxon>
        <taxon>Bacillota</taxon>
        <taxon>Bacilli</taxon>
        <taxon>Bacillales</taxon>
        <taxon>Bacillaceae</taxon>
        <taxon>Bacillus</taxon>
        <taxon>Bacillus amyloliquefaciens group</taxon>
    </lineage>
</organism>
<accession>A7Z8J3</accession>
<protein>
    <recommendedName>
        <fullName evidence="1">Glycine cleavage system H protein</fullName>
    </recommendedName>
    <alternativeName>
        <fullName evidence="1">Octanoyl/lipoyl carrier protein</fullName>
    </alternativeName>
</protein>
<sequence>MSTPKDMRYSKEHEWVKVEDGKARIGITHFAQAELGDIVFVELPEVGAEIKADEPFGSVESVKTVSELYAPINGTVTEVNEDLDDSPEFVNESPYEKAWMIVVEPADAEEIENLMTSEQYDEMTQED</sequence>
<gene>
    <name evidence="1" type="primary">gcvH</name>
    <name type="ordered locus">RBAM_029880</name>
</gene>
<comment type="function">
    <text evidence="1">The glycine cleavage system catalyzes the degradation of glycine. The H protein shuttles the methylamine group of glycine from the P protein to the T protein.</text>
</comment>
<comment type="function">
    <text evidence="1">Is also involved in protein lipoylation via its role as an octanoyl/lipoyl carrier protein intermediate.</text>
</comment>
<comment type="cofactor">
    <cofactor evidence="1">
        <name>(R)-lipoate</name>
        <dbReference type="ChEBI" id="CHEBI:83088"/>
    </cofactor>
    <text evidence="1">Binds 1 lipoyl cofactor covalently.</text>
</comment>
<comment type="subunit">
    <text evidence="1">The glycine cleavage system is composed of four proteins: P, T, L and H.</text>
</comment>
<comment type="similarity">
    <text evidence="1">Belongs to the GcvH family.</text>
</comment>
<proteinExistence type="inferred from homology"/>
<reference key="1">
    <citation type="journal article" date="2007" name="Nat. Biotechnol.">
        <title>Comparative analysis of the complete genome sequence of the plant growth-promoting bacterium Bacillus amyloliquefaciens FZB42.</title>
        <authorList>
            <person name="Chen X.H."/>
            <person name="Koumoutsi A."/>
            <person name="Scholz R."/>
            <person name="Eisenreich A."/>
            <person name="Schneider K."/>
            <person name="Heinemeyer I."/>
            <person name="Morgenstern B."/>
            <person name="Voss B."/>
            <person name="Hess W.R."/>
            <person name="Reva O."/>
            <person name="Junge H."/>
            <person name="Voigt B."/>
            <person name="Jungblut P.R."/>
            <person name="Vater J."/>
            <person name="Suessmuth R."/>
            <person name="Liesegang H."/>
            <person name="Strittmatter A."/>
            <person name="Gottschalk G."/>
            <person name="Borriss R."/>
        </authorList>
    </citation>
    <scope>NUCLEOTIDE SEQUENCE [LARGE SCALE GENOMIC DNA]</scope>
    <source>
        <strain>DSM 23117 / BGSC 10A6 / LMG 26770 / FZB42</strain>
    </source>
</reference>